<evidence type="ECO:0000250" key="1">
    <source>
        <dbReference type="UniProtKB" id="A2AQ07"/>
    </source>
</evidence>
<evidence type="ECO:0000250" key="2">
    <source>
        <dbReference type="UniProtKB" id="P07437"/>
    </source>
</evidence>
<evidence type="ECO:0000250" key="3">
    <source>
        <dbReference type="UniProtKB" id="P68363"/>
    </source>
</evidence>
<evidence type="ECO:0000250" key="4">
    <source>
        <dbReference type="UniProtKB" id="Q13509"/>
    </source>
</evidence>
<evidence type="ECO:0000250" key="5">
    <source>
        <dbReference type="UniProtKB" id="Q2T9S0"/>
    </source>
</evidence>
<evidence type="ECO:0000250" key="6">
    <source>
        <dbReference type="UniProtKB" id="Q71U36"/>
    </source>
</evidence>
<evidence type="ECO:0000256" key="7">
    <source>
        <dbReference type="SAM" id="MobiDB-lite"/>
    </source>
</evidence>
<evidence type="ECO:0000305" key="8"/>
<reference key="1">
    <citation type="journal article" date="1993" name="Cell Motil. Cytoskeleton">
        <title>Divergent neural beta tubulin from the Antarctic fish Notothenia coriiceps neglecta: potential sequence contributions to cold adaptation of microtubule assembly.</title>
        <authorList>
            <person name="Detrich H.W. III"/>
            <person name="Parker S.K."/>
        </authorList>
    </citation>
    <scope>NUCLEOTIDE SEQUENCE [MRNA]</scope>
    <scope>PROTEIN SEQUENCE OF 1-40</scope>
    <source>
        <tissue>Brain</tissue>
    </source>
</reference>
<comment type="function">
    <text>Tubulin is the major constituent of microtubules, a cylinder consisting of laterally associated linear protofilaments composed of alpha- and beta-tubulin heterodimers. Microtubules grow by the addition of GTP-tubulin dimers to the microtubule end, where a stabilizing cap forms. Below the cap, tubulin dimers are in GDP-bound state, owing to GTPase activity of alpha-tubulin.</text>
</comment>
<comment type="cofactor">
    <cofactor evidence="3">
        <name>Mg(2+)</name>
        <dbReference type="ChEBI" id="CHEBI:18420"/>
    </cofactor>
</comment>
<comment type="subunit">
    <text>Dimer of alpha and beta chains. A typical microtubule is a hollow water-filled tube with an outer diameter of 25 nm and an inner diameter of 15 nM. Alpha-beta heterodimers associate head-to-tail to form protofilaments running lengthwise along the microtubule wall with the beta-tubulin subunit facing the microtubule plus end conferring a structural polarity. Microtubules usually have 13 protofilaments but different protofilament numbers can be found in some organisms and specialized cells.</text>
</comment>
<comment type="subcellular location">
    <subcellularLocation>
        <location>Cytoplasm</location>
        <location>Cytoskeleton</location>
    </subcellularLocation>
</comment>
<comment type="tissue specificity">
    <text>Brain.</text>
</comment>
<comment type="domain">
    <text evidence="2">The MREI motif is common among all beta-tubulin isoforms and may be critical for tubulin autoregulation.</text>
</comment>
<comment type="PTM">
    <text evidence="1">Some glutamate residues at the C-terminus are polyglycylated, resulting in polyglycine chains on the gamma-carboxyl group. Glycylation is mainly limited to tubulin incorporated into axonemes (cilia and flagella) whereas glutamylation is prevalent in neuronal cells, centrioles, axonemes, and the mitotic spindle. Both modifications can coexist on the same protein on adjacent residues, and lowering polyglycylation levels increases polyglutamylation, and reciprocally. The precise function of polyglycylation is still unclear.</text>
</comment>
<comment type="PTM">
    <text evidence="1 6">Some glutamate residues at the C-terminus are polyglutamylated, resulting in polyglutamate chains on the gamma-carboxyl group (By similarity). Polyglutamylation plays a key role in microtubule severing by spastin (SPAST). SPAST preferentially recognizes and acts on microtubules decorated with short polyglutamate tails: severing activity by SPAST increases as the number of glutamates per tubulin rises from one to eight, but decreases beyond this glutamylation threshold (By similarity).</text>
</comment>
<comment type="similarity">
    <text evidence="8">Belongs to the tubulin family.</text>
</comment>
<gene>
    <name type="primary">tubb1</name>
</gene>
<dbReference type="EMBL" id="L08013">
    <property type="protein sequence ID" value="AAA49393.1"/>
    <property type="molecule type" value="mRNA"/>
</dbReference>
<dbReference type="EMBL" id="S57698">
    <property type="protein sequence ID" value="AAB26110.1"/>
    <property type="molecule type" value="mRNA"/>
</dbReference>
<dbReference type="PIR" id="A48407">
    <property type="entry name" value="A48407"/>
</dbReference>
<dbReference type="SMR" id="P36221"/>
<dbReference type="GO" id="GO:0005737">
    <property type="term" value="C:cytoplasm"/>
    <property type="evidence" value="ECO:0007669"/>
    <property type="project" value="UniProtKB-KW"/>
</dbReference>
<dbReference type="GO" id="GO:0005874">
    <property type="term" value="C:microtubule"/>
    <property type="evidence" value="ECO:0007669"/>
    <property type="project" value="UniProtKB-KW"/>
</dbReference>
<dbReference type="GO" id="GO:0005525">
    <property type="term" value="F:GTP binding"/>
    <property type="evidence" value="ECO:0007669"/>
    <property type="project" value="UniProtKB-KW"/>
</dbReference>
<dbReference type="GO" id="GO:0003924">
    <property type="term" value="F:GTPase activity"/>
    <property type="evidence" value="ECO:0007669"/>
    <property type="project" value="InterPro"/>
</dbReference>
<dbReference type="GO" id="GO:0046872">
    <property type="term" value="F:metal ion binding"/>
    <property type="evidence" value="ECO:0007669"/>
    <property type="project" value="UniProtKB-KW"/>
</dbReference>
<dbReference type="GO" id="GO:0005200">
    <property type="term" value="F:structural constituent of cytoskeleton"/>
    <property type="evidence" value="ECO:0007669"/>
    <property type="project" value="InterPro"/>
</dbReference>
<dbReference type="GO" id="GO:0007017">
    <property type="term" value="P:microtubule-based process"/>
    <property type="evidence" value="ECO:0007669"/>
    <property type="project" value="InterPro"/>
</dbReference>
<dbReference type="CDD" id="cd02187">
    <property type="entry name" value="beta_tubulin"/>
    <property type="match status" value="1"/>
</dbReference>
<dbReference type="FunFam" id="1.10.287.600:FF:000006">
    <property type="entry name" value="Tubulin beta chain"/>
    <property type="match status" value="1"/>
</dbReference>
<dbReference type="FunFam" id="3.30.1330.20:FF:000002">
    <property type="entry name" value="Tubulin beta chain"/>
    <property type="match status" value="1"/>
</dbReference>
<dbReference type="FunFam" id="3.40.50.1440:FF:000003">
    <property type="entry name" value="Tubulin beta chain"/>
    <property type="match status" value="1"/>
</dbReference>
<dbReference type="Gene3D" id="1.10.287.600">
    <property type="entry name" value="Helix hairpin bin"/>
    <property type="match status" value="1"/>
</dbReference>
<dbReference type="Gene3D" id="3.30.1330.20">
    <property type="entry name" value="Tubulin/FtsZ, C-terminal domain"/>
    <property type="match status" value="1"/>
</dbReference>
<dbReference type="Gene3D" id="3.40.50.1440">
    <property type="entry name" value="Tubulin/FtsZ, GTPase domain"/>
    <property type="match status" value="1"/>
</dbReference>
<dbReference type="InterPro" id="IPR013838">
    <property type="entry name" value="Beta-tubulin_BS"/>
</dbReference>
<dbReference type="InterPro" id="IPR002453">
    <property type="entry name" value="Beta_tubulin"/>
</dbReference>
<dbReference type="InterPro" id="IPR008280">
    <property type="entry name" value="Tub_FtsZ_C"/>
</dbReference>
<dbReference type="InterPro" id="IPR000217">
    <property type="entry name" value="Tubulin"/>
</dbReference>
<dbReference type="InterPro" id="IPR037103">
    <property type="entry name" value="Tubulin/FtsZ-like_C"/>
</dbReference>
<dbReference type="InterPro" id="IPR018316">
    <property type="entry name" value="Tubulin/FtsZ_2-layer-sand-dom"/>
</dbReference>
<dbReference type="InterPro" id="IPR036525">
    <property type="entry name" value="Tubulin/FtsZ_GTPase_sf"/>
</dbReference>
<dbReference type="InterPro" id="IPR023123">
    <property type="entry name" value="Tubulin_C"/>
</dbReference>
<dbReference type="InterPro" id="IPR017975">
    <property type="entry name" value="Tubulin_CS"/>
</dbReference>
<dbReference type="InterPro" id="IPR003008">
    <property type="entry name" value="Tubulin_FtsZ_GTPase"/>
</dbReference>
<dbReference type="PANTHER" id="PTHR11588">
    <property type="entry name" value="TUBULIN"/>
    <property type="match status" value="1"/>
</dbReference>
<dbReference type="Pfam" id="PF00091">
    <property type="entry name" value="Tubulin"/>
    <property type="match status" value="1"/>
</dbReference>
<dbReference type="Pfam" id="PF03953">
    <property type="entry name" value="Tubulin_C"/>
    <property type="match status" value="1"/>
</dbReference>
<dbReference type="PRINTS" id="PR01163">
    <property type="entry name" value="BETATUBULIN"/>
</dbReference>
<dbReference type="PRINTS" id="PR01161">
    <property type="entry name" value="TUBULIN"/>
</dbReference>
<dbReference type="SMART" id="SM00864">
    <property type="entry name" value="Tubulin"/>
    <property type="match status" value="1"/>
</dbReference>
<dbReference type="SMART" id="SM00865">
    <property type="entry name" value="Tubulin_C"/>
    <property type="match status" value="1"/>
</dbReference>
<dbReference type="SUPFAM" id="SSF55307">
    <property type="entry name" value="Tubulin C-terminal domain-like"/>
    <property type="match status" value="1"/>
</dbReference>
<dbReference type="SUPFAM" id="SSF52490">
    <property type="entry name" value="Tubulin nucleotide-binding domain-like"/>
    <property type="match status" value="1"/>
</dbReference>
<dbReference type="PROSITE" id="PS00227">
    <property type="entry name" value="TUBULIN"/>
    <property type="match status" value="1"/>
</dbReference>
<dbReference type="PROSITE" id="PS00228">
    <property type="entry name" value="TUBULIN_B_AUTOREG"/>
    <property type="match status" value="1"/>
</dbReference>
<organism>
    <name type="scientific">Notothenia neglecta</name>
    <name type="common">Yellowbelly rockcod</name>
    <name type="synonym">Notothenia coriiceps neglecta</name>
    <dbReference type="NCBI Taxonomy" id="202063"/>
    <lineage>
        <taxon>Eukaryota</taxon>
        <taxon>Metazoa</taxon>
        <taxon>Chordata</taxon>
        <taxon>Craniata</taxon>
        <taxon>Vertebrata</taxon>
        <taxon>Euteleostomi</taxon>
        <taxon>Actinopterygii</taxon>
        <taxon>Neopterygii</taxon>
        <taxon>Teleostei</taxon>
        <taxon>Neoteleostei</taxon>
        <taxon>Acanthomorphata</taxon>
        <taxon>Eupercaria</taxon>
        <taxon>Perciformes</taxon>
        <taxon>Notothenioidei</taxon>
        <taxon>Nototheniidae</taxon>
        <taxon>Notothenia</taxon>
    </lineage>
</organism>
<protein>
    <recommendedName>
        <fullName>Tubulin beta-1 chain</fullName>
    </recommendedName>
    <alternativeName>
        <fullName>Beta-1-tubulin</fullName>
    </alternativeName>
</protein>
<keyword id="KW-0963">Cytoplasm</keyword>
<keyword id="KW-0206">Cytoskeleton</keyword>
<keyword id="KW-0903">Direct protein sequencing</keyword>
<keyword id="KW-0342">GTP-binding</keyword>
<keyword id="KW-1017">Isopeptide bond</keyword>
<keyword id="KW-0460">Magnesium</keyword>
<keyword id="KW-0479">Metal-binding</keyword>
<keyword id="KW-0493">Microtubule</keyword>
<keyword id="KW-0547">Nucleotide-binding</keyword>
<sequence length="446" mass="49806">MREIVHLQAGQCGNQIGSKFWEVISDEHGIDPTGSYHGDSDLQLDRINVYYNEASGGKYVPRAVLVDLEPGTMDSVRSGPFGQIFRPDNFVFGQSGAGNNWAKGHYTEGAELVDSVLDVVRKEAEGCDCLQGFQLTHSLGGGTGSGMGTLLISKIREEYPDRIMNTFSVVPSPKVSDTVVEPYNATLSVHQLVENTDETFCIDNEALYDICFRTLKLTTPTYGDLNHLVSATMSGVTTCLRFPGQLNADLRKLAVNMVPFPRLHFFIPGFAPLTSRGGQQYRSLTVPELTQQMFDSKNMMAACDPRHGRYLTVAAIFRGRMSMKEVDEQMLNAQNKNSSYFVEWIPNNVKTAVCDIPPRGLKMAATFIGNSTAIQELFKRISEQFTAMFRRKAFLHWYTGEGMDEMEFTEAESNMNDLVSEYQQYQDATAEEEGEFEEEGEYEDGA</sequence>
<name>TBB1_NOTNE</name>
<accession>P36221</accession>
<feature type="chain" id="PRO_0000048303" description="Tubulin beta-1 chain">
    <location>
        <begin position="1"/>
        <end position="446"/>
    </location>
</feature>
<feature type="region of interest" description="Disordered" evidence="7">
    <location>
        <begin position="426"/>
        <end position="446"/>
    </location>
</feature>
<feature type="short sequence motif" description="MREI motif" evidence="2">
    <location>
        <begin position="1"/>
        <end position="4"/>
    </location>
</feature>
<feature type="compositionally biased region" description="Acidic residues" evidence="7">
    <location>
        <begin position="429"/>
        <end position="446"/>
    </location>
</feature>
<feature type="binding site" evidence="4">
    <location>
        <position position="11"/>
    </location>
    <ligand>
        <name>GTP</name>
        <dbReference type="ChEBI" id="CHEBI:37565"/>
    </ligand>
</feature>
<feature type="binding site" evidence="3">
    <location>
        <position position="69"/>
    </location>
    <ligand>
        <name>GTP</name>
        <dbReference type="ChEBI" id="CHEBI:37565"/>
    </ligand>
</feature>
<feature type="binding site" evidence="3">
    <location>
        <position position="69"/>
    </location>
    <ligand>
        <name>Mg(2+)</name>
        <dbReference type="ChEBI" id="CHEBI:18420"/>
    </ligand>
</feature>
<feature type="binding site" evidence="4">
    <location>
        <position position="138"/>
    </location>
    <ligand>
        <name>GTP</name>
        <dbReference type="ChEBI" id="CHEBI:37565"/>
    </ligand>
</feature>
<feature type="binding site" evidence="4">
    <location>
        <position position="142"/>
    </location>
    <ligand>
        <name>GTP</name>
        <dbReference type="ChEBI" id="CHEBI:37565"/>
    </ligand>
</feature>
<feature type="binding site" evidence="4">
    <location>
        <position position="143"/>
    </location>
    <ligand>
        <name>GTP</name>
        <dbReference type="ChEBI" id="CHEBI:37565"/>
    </ligand>
</feature>
<feature type="binding site" evidence="4">
    <location>
        <position position="144"/>
    </location>
    <ligand>
        <name>GTP</name>
        <dbReference type="ChEBI" id="CHEBI:37565"/>
    </ligand>
</feature>
<feature type="binding site" evidence="4">
    <location>
        <position position="204"/>
    </location>
    <ligand>
        <name>GTP</name>
        <dbReference type="ChEBI" id="CHEBI:37565"/>
    </ligand>
</feature>
<feature type="binding site" evidence="4">
    <location>
        <position position="226"/>
    </location>
    <ligand>
        <name>GTP</name>
        <dbReference type="ChEBI" id="CHEBI:37565"/>
    </ligand>
</feature>
<feature type="modified residue" description="5-glutamyl polyglutamate" evidence="5">
    <location>
        <position position="438"/>
    </location>
</feature>
<proteinExistence type="evidence at protein level"/>